<gene>
    <name type="primary">inlH</name>
    <name type="ordered locus">lmo0263</name>
</gene>
<organism>
    <name type="scientific">Listeria monocytogenes serovar 1/2a (strain ATCC BAA-679 / EGD-e)</name>
    <dbReference type="NCBI Taxonomy" id="169963"/>
    <lineage>
        <taxon>Bacteria</taxon>
        <taxon>Bacillati</taxon>
        <taxon>Bacillota</taxon>
        <taxon>Bacilli</taxon>
        <taxon>Bacillales</taxon>
        <taxon>Listeriaceae</taxon>
        <taxon>Listeria</taxon>
    </lineage>
</organism>
<protein>
    <recommendedName>
        <fullName>Internalin H</fullName>
    </recommendedName>
</protein>
<name>INLH_LISMO</name>
<accession>Q7AP87</accession>
<feature type="signal peptide" evidence="1">
    <location>
        <begin position="1"/>
        <end position="30"/>
    </location>
</feature>
<feature type="chain" id="PRO_5004286629" description="Internalin H" evidence="1">
    <location>
        <begin position="31"/>
        <end position="548"/>
    </location>
</feature>
<feature type="propeptide" id="PRO_0000445901" description="Removed by sortase A" evidence="2 9 10 11">
    <location>
        <begin position="519"/>
        <end position="548"/>
    </location>
</feature>
<feature type="repeat" description="LRR 1" evidence="4">
    <location>
        <begin position="93"/>
        <end position="105"/>
    </location>
</feature>
<feature type="repeat" description="LRR 2" evidence="4">
    <location>
        <begin position="113"/>
        <end position="127"/>
    </location>
</feature>
<feature type="repeat" description="LRR 3" evidence="4">
    <location>
        <begin position="135"/>
        <end position="149"/>
    </location>
</feature>
<feature type="repeat" description="LRR 4" evidence="4">
    <location>
        <begin position="157"/>
        <end position="171"/>
    </location>
</feature>
<feature type="repeat" description="LRR 5" evidence="4">
    <location>
        <begin position="179"/>
        <end position="193"/>
    </location>
</feature>
<feature type="repeat" description="LRR 6" evidence="4">
    <location>
        <begin position="201"/>
        <end position="215"/>
    </location>
</feature>
<feature type="repeat" description="LRR 7" evidence="4">
    <location>
        <begin position="223"/>
        <end position="236"/>
    </location>
</feature>
<feature type="region of interest" description="Disordered" evidence="3">
    <location>
        <begin position="480"/>
        <end position="518"/>
    </location>
</feature>
<feature type="short sequence motif" description="LPXTG sorting signal" evidence="2">
    <location>
        <begin position="515"/>
        <end position="519"/>
    </location>
</feature>
<feature type="compositionally biased region" description="Low complexity" evidence="3">
    <location>
        <begin position="483"/>
        <end position="498"/>
    </location>
</feature>
<feature type="compositionally biased region" description="Polar residues" evidence="3">
    <location>
        <begin position="504"/>
        <end position="516"/>
    </location>
</feature>
<feature type="modified residue" description="Pentaglycyl murein peptidoglycan amidated alanine" evidence="2">
    <location>
        <position position="518"/>
    </location>
</feature>
<proteinExistence type="evidence at protein level"/>
<dbReference type="EMBL" id="AL591974">
    <property type="protein sequence ID" value="CAD00790.1"/>
    <property type="molecule type" value="Genomic_DNA"/>
</dbReference>
<dbReference type="PIR" id="AH1107">
    <property type="entry name" value="AH1107"/>
</dbReference>
<dbReference type="RefSeq" id="NP_463794.1">
    <property type="nucleotide sequence ID" value="NC_003210.1"/>
</dbReference>
<dbReference type="RefSeq" id="WP_010989386.1">
    <property type="nucleotide sequence ID" value="NZ_CP149495.1"/>
</dbReference>
<dbReference type="PDB" id="1H6U">
    <property type="method" value="X-ray"/>
    <property type="resolution" value="1.80 A"/>
    <property type="chains" value="A=37-343"/>
</dbReference>
<dbReference type="PDBsum" id="1H6U"/>
<dbReference type="SMR" id="Q7AP87"/>
<dbReference type="STRING" id="169963.gene:17592914"/>
<dbReference type="PaxDb" id="169963-lmo0263"/>
<dbReference type="EnsemblBacteria" id="CAD00790">
    <property type="protein sequence ID" value="CAD00790"/>
    <property type="gene ID" value="CAD00790"/>
</dbReference>
<dbReference type="GeneID" id="987355"/>
<dbReference type="KEGG" id="lmo:lmo0263"/>
<dbReference type="PATRIC" id="fig|169963.11.peg.271"/>
<dbReference type="eggNOG" id="COG4886">
    <property type="taxonomic scope" value="Bacteria"/>
</dbReference>
<dbReference type="HOGENOM" id="CLU_019447_3_0_9"/>
<dbReference type="OrthoDB" id="2361240at2"/>
<dbReference type="PhylomeDB" id="Q7AP87"/>
<dbReference type="BioCyc" id="LMON169963:LMO0263-MONOMER"/>
<dbReference type="Proteomes" id="UP000000817">
    <property type="component" value="Chromosome"/>
</dbReference>
<dbReference type="GO" id="GO:0005576">
    <property type="term" value="C:extracellular region"/>
    <property type="evidence" value="ECO:0007669"/>
    <property type="project" value="UniProtKB-SubCell"/>
</dbReference>
<dbReference type="Gene3D" id="2.60.40.1220">
    <property type="match status" value="1"/>
</dbReference>
<dbReference type="Gene3D" id="1.10.8.390">
    <property type="entry name" value="Internalin N-terminal Cap domain-like"/>
    <property type="match status" value="1"/>
</dbReference>
<dbReference type="Gene3D" id="2.60.40.4270">
    <property type="entry name" value="Listeria-Bacteroides repeat domain"/>
    <property type="match status" value="2"/>
</dbReference>
<dbReference type="Gene3D" id="3.80.10.10">
    <property type="entry name" value="Ribonuclease Inhibitor"/>
    <property type="match status" value="1"/>
</dbReference>
<dbReference type="InterPro" id="IPR014755">
    <property type="entry name" value="Cu-Rt/internalin_Ig-like"/>
</dbReference>
<dbReference type="InterPro" id="IPR014756">
    <property type="entry name" value="Ig_E-set"/>
</dbReference>
<dbReference type="InterPro" id="IPR012569">
    <property type="entry name" value="Inl_IR"/>
</dbReference>
<dbReference type="InterPro" id="IPR013378">
    <property type="entry name" value="InlB-like_B-rpt"/>
</dbReference>
<dbReference type="InterPro" id="IPR024634">
    <property type="entry name" value="Internalin_N"/>
</dbReference>
<dbReference type="InterPro" id="IPR001611">
    <property type="entry name" value="Leu-rich_rpt"/>
</dbReference>
<dbReference type="InterPro" id="IPR025875">
    <property type="entry name" value="Leu-rich_rpt_4"/>
</dbReference>
<dbReference type="InterPro" id="IPR003591">
    <property type="entry name" value="Leu-rich_rpt_typical-subtyp"/>
</dbReference>
<dbReference type="InterPro" id="IPR042229">
    <property type="entry name" value="Listeria/Bacterioides_rpt_sf"/>
</dbReference>
<dbReference type="InterPro" id="IPR032675">
    <property type="entry name" value="LRR_dom_sf"/>
</dbReference>
<dbReference type="InterPro" id="IPR050836">
    <property type="entry name" value="SDS22/Internalin_LRR"/>
</dbReference>
<dbReference type="NCBIfam" id="NF033188">
    <property type="entry name" value="internalin_H"/>
    <property type="match status" value="1"/>
</dbReference>
<dbReference type="NCBIfam" id="TIGR02543">
    <property type="entry name" value="List_Bact_rpt"/>
    <property type="match status" value="2"/>
</dbReference>
<dbReference type="NCBIfam" id="TIGR01167">
    <property type="entry name" value="LPXTG_anchor"/>
    <property type="match status" value="1"/>
</dbReference>
<dbReference type="PANTHER" id="PTHR46652">
    <property type="entry name" value="LEUCINE-RICH REPEAT AND IQ DOMAIN-CONTAINING PROTEIN 1-RELATED"/>
    <property type="match status" value="1"/>
</dbReference>
<dbReference type="PANTHER" id="PTHR46652:SF3">
    <property type="entry name" value="LEUCINE-RICH REPEAT-CONTAINING PROTEIN 9"/>
    <property type="match status" value="1"/>
</dbReference>
<dbReference type="Pfam" id="PF09479">
    <property type="entry name" value="Flg_new"/>
    <property type="match status" value="2"/>
</dbReference>
<dbReference type="Pfam" id="PF12354">
    <property type="entry name" value="Internalin_N"/>
    <property type="match status" value="1"/>
</dbReference>
<dbReference type="Pfam" id="PF12799">
    <property type="entry name" value="LRR_4"/>
    <property type="match status" value="3"/>
</dbReference>
<dbReference type="Pfam" id="PF08191">
    <property type="entry name" value="LRR_adjacent"/>
    <property type="match status" value="1"/>
</dbReference>
<dbReference type="SMART" id="SM00365">
    <property type="entry name" value="LRR_SD22"/>
    <property type="match status" value="5"/>
</dbReference>
<dbReference type="SMART" id="SM00369">
    <property type="entry name" value="LRR_TYP"/>
    <property type="match status" value="4"/>
</dbReference>
<dbReference type="SUPFAM" id="SSF81296">
    <property type="entry name" value="E set domains"/>
    <property type="match status" value="1"/>
</dbReference>
<dbReference type="SUPFAM" id="SSF52058">
    <property type="entry name" value="L domain-like"/>
    <property type="match status" value="1"/>
</dbReference>
<dbReference type="PROSITE" id="PS51450">
    <property type="entry name" value="LRR"/>
    <property type="match status" value="7"/>
</dbReference>
<keyword id="KW-0002">3D-structure</keyword>
<keyword id="KW-0134">Cell wall</keyword>
<keyword id="KW-0433">Leucine-rich repeat</keyword>
<keyword id="KW-0572">Peptidoglycan-anchor</keyword>
<keyword id="KW-1185">Reference proteome</keyword>
<keyword id="KW-0677">Repeat</keyword>
<keyword id="KW-0964">Secreted</keyword>
<keyword id="KW-0732">Signal</keyword>
<keyword id="KW-0346">Stress response</keyword>
<sequence length="548" mass="58681">MKKRWNSVFKLVLMVTAILGLSLYVTTSQGVEVRAESITQPTAINVIFPDPALANAIKIAAGKSNVTDTVTQADLDGITTLSAFGTGVTTIEGVQYLNNLIGLELKDNQITDLTPLKNLTKITELELSGNPLKNVSAIAGLQSIKTLDLTSTQITDVTPLAGLSNLQVLYLDLNQITNISPLAGLTNLQYLSIGNAQVSDLTPLANLSKLTTLKADDNKISDISPLASLPNLIEVHLKNNQISDVSPLANTSNLFIVTLTNQTITNQPVFYQNNLVVPNVVKGPSGAPIAPATISDNGTYASPNLTWNLTSFINNVSYTFNQSVTFKNTTVPFSGTVTQPLTEAYTAVFDVDGKQTSVTVGANELIKEPTAPTKEGYTFTGWYDAKTGGTKWDFATDKMPAEDITLYAQFTINSYTATFDIDGKLTTQKVTYQSLLEEPVAPTKDGYTFTGWYDAKTGGTKWDFATGKMPAGNITLYAQFTKNDNPNPDDPTTNTPTGNGDGTSNPSNSGGNTTLPTAGDENTMLPIFIGVFLLGTATLILRKTIKVK</sequence>
<evidence type="ECO:0000255" key="1"/>
<evidence type="ECO:0000255" key="2">
    <source>
        <dbReference type="PROSITE-ProRule" id="PRU00477"/>
    </source>
</evidence>
<evidence type="ECO:0000256" key="3">
    <source>
        <dbReference type="SAM" id="MobiDB-lite"/>
    </source>
</evidence>
<evidence type="ECO:0000269" key="4">
    <source>
    </source>
</evidence>
<evidence type="ECO:0000269" key="5">
    <source>
    </source>
</evidence>
<evidence type="ECO:0000269" key="6">
    <source>
    </source>
</evidence>
<evidence type="ECO:0000269" key="7">
    <source>
    </source>
</evidence>
<evidence type="ECO:0000305" key="8"/>
<evidence type="ECO:0000305" key="9">
    <source>
    </source>
</evidence>
<evidence type="ECO:0000305" key="10">
    <source>
    </source>
</evidence>
<evidence type="ECO:0000305" key="11">
    <source>
    </source>
</evidence>
<evidence type="ECO:0007744" key="12">
    <source>
        <dbReference type="PDB" id="1H6U"/>
    </source>
</evidence>
<reference key="1">
    <citation type="journal article" date="2001" name="Science">
        <title>Comparative genomics of Listeria species.</title>
        <authorList>
            <person name="Glaser P."/>
            <person name="Frangeul L."/>
            <person name="Buchrieser C."/>
            <person name="Rusniok C."/>
            <person name="Amend A."/>
            <person name="Baquero F."/>
            <person name="Berche P."/>
            <person name="Bloecker H."/>
            <person name="Brandt P."/>
            <person name="Chakraborty T."/>
            <person name="Charbit A."/>
            <person name="Chetouani F."/>
            <person name="Couve E."/>
            <person name="de Daruvar A."/>
            <person name="Dehoux P."/>
            <person name="Domann E."/>
            <person name="Dominguez-Bernal G."/>
            <person name="Duchaud E."/>
            <person name="Durant L."/>
            <person name="Dussurget O."/>
            <person name="Entian K.-D."/>
            <person name="Fsihi H."/>
            <person name="Garcia-del Portillo F."/>
            <person name="Garrido P."/>
            <person name="Gautier L."/>
            <person name="Goebel W."/>
            <person name="Gomez-Lopez N."/>
            <person name="Hain T."/>
            <person name="Hauf J."/>
            <person name="Jackson D."/>
            <person name="Jones L.-M."/>
            <person name="Kaerst U."/>
            <person name="Kreft J."/>
            <person name="Kuhn M."/>
            <person name="Kunst F."/>
            <person name="Kurapkat G."/>
            <person name="Madueno E."/>
            <person name="Maitournam A."/>
            <person name="Mata Vicente J."/>
            <person name="Ng E."/>
            <person name="Nedjari H."/>
            <person name="Nordsiek G."/>
            <person name="Novella S."/>
            <person name="de Pablos B."/>
            <person name="Perez-Diaz J.-C."/>
            <person name="Purcell R."/>
            <person name="Remmel B."/>
            <person name="Rose M."/>
            <person name="Schlueter T."/>
            <person name="Simoes N."/>
            <person name="Tierrez A."/>
            <person name="Vazquez-Boland J.-A."/>
            <person name="Voss H."/>
            <person name="Wehland J."/>
            <person name="Cossart P."/>
        </authorList>
    </citation>
    <scope>NUCLEOTIDE SEQUENCE [LARGE SCALE GENOMIC DNA]</scope>
    <source>
        <strain>ATCC BAA-679 / EGD-e</strain>
    </source>
</reference>
<reference key="2">
    <citation type="journal article" date="2005" name="Proteomics">
        <title>Identification of substrates of the Listeria monocytogenes sortases A and B by a non-gel proteomic analysis.</title>
        <authorList>
            <person name="Pucciarelli M.G."/>
            <person name="Calvo E."/>
            <person name="Sabet C."/>
            <person name="Bierne H."/>
            <person name="Cossart P."/>
            <person name="Garcia-del Portillo F."/>
        </authorList>
    </citation>
    <scope>IDENTIFICATION BY MASS SPECTROMETRY</scope>
    <scope>PROCESSING BY SRTA</scope>
    <source>
        <strain>ATCC BAA-679 / EGD-e</strain>
    </source>
</reference>
<reference key="3">
    <citation type="journal article" date="2010" name="Infect. Immun.">
        <title>The stress-induced virulence protein InlH controls interleukin-6 production during murine listeriosis.</title>
        <authorList>
            <person name="Personnic N."/>
            <person name="Bruck S."/>
            <person name="Nahori M.A."/>
            <person name="Toledo-Arana A."/>
            <person name="Nikitas G."/>
            <person name="Lecuit M."/>
            <person name="Dussurget O."/>
            <person name="Cossart P."/>
            <person name="Bierne H."/>
        </authorList>
    </citation>
    <scope>FUNCTION</scope>
    <scope>SUBCELLULAR LOCATION</scope>
    <scope>INDUCTION BY STRESS</scope>
    <scope>DISRUPTION PHENOTYPE</scope>
    <source>
        <strain>ATCC BAA-679 / EGD-e</strain>
    </source>
</reference>
<reference key="4">
    <citation type="journal article" date="2011" name="J. Bacteriol.">
        <title>Regulated shift from helical to polar localization of Listeria monocytogenes cell wall-anchored proteins.</title>
        <authorList>
            <person name="Bruck S."/>
            <person name="Personnic N."/>
            <person name="Prevost M.C."/>
            <person name="Cossart P."/>
            <person name="Bierne H."/>
        </authorList>
    </citation>
    <scope>SUBCELLULAR LOCATION</scope>
    <scope>INDUCTION</scope>
    <source>
        <strain>ATCC BAA-679 / EGD-e</strain>
    </source>
</reference>
<reference key="5">
    <citation type="journal article" date="2012" name="Int. Microbiol.">
        <title>Contribution of sortase A to the regulation of Listeria monocytogenes LPXTG surface proteins.</title>
        <authorList>
            <person name="Mariscotti J.F."/>
            <person name="Quereda J.J."/>
            <person name="Pucciarelli M.G."/>
        </authorList>
    </citation>
    <scope>SUBCELLULAR LOCATION</scope>
    <scope>PROCESSING BY SRTA</scope>
    <source>
        <strain>ATCC BAA-679 / EGD-e</strain>
    </source>
</reference>
<reference evidence="12" key="6">
    <citation type="journal article" date="2001" name="J. Mol. Biol.">
        <title>Internalins from the human pathogen Listeria monocytogenes combine three distinct folds into a contiguous internalin domain.</title>
        <authorList>
            <person name="Schubert W.D."/>
            <person name="Goebel G."/>
            <person name="Diepholz M."/>
            <person name="Darji A."/>
            <person name="Kloer D."/>
            <person name="Hain T."/>
            <person name="Chakraborty T."/>
            <person name="Wehland J."/>
            <person name="Domann E."/>
            <person name="Heinz D.W."/>
        </authorList>
    </citation>
    <scope>X-RAY CRYSTALLOGRAPHY (1.80 ANGSTROMS) OF 37-343</scope>
    <scope>DOMAIN</scope>
    <scope>DISRUPTION PHENOTYPE</scope>
</reference>
<comment type="function">
    <text evidence="5">Contributes to systemic listeriosis in mice by decreasing host IL-6 cytokine production and thus evasion of the host immune response. Does not contribute to invasion of the host intestinal tissue.</text>
</comment>
<comment type="subcellular location">
    <subcellularLocation>
        <location evidence="2 5 6 7">Secreted</location>
        <location evidence="2 5 6 7">Cell wall</location>
        <topology evidence="2 9 10">Peptidoglycan-anchor</topology>
    </subcellularLocation>
    <subcellularLocation>
        <location evidence="7">Secreted</location>
    </subcellularLocation>
    <text evidence="6 7">In the absence of SrtA in exponential phase some protein is still anchored to the cell wall while protein levels are the same in the srtA mutant; in stationary phase much less protein accumulates (PubMed:22837151). During exponential growth detected on the cell surface as a series of dots in a helical pattern, it is excluded from the septum (PubMed:21725001). The helical pattern of InlA does not overlap with that of InlH, InlJ or Hbp2 (SvpA) (PubMed:21725001). In stationary phase colocalizes with InlA at cell poles and at the septum, the location shift requires SigB (PubMed:21725001).</text>
</comment>
<comment type="induction">
    <text evidence="5 6">More prevalent in stationary than exponential phase (at protein level) (PubMed:20176794, PubMed:21725001). Single gene transcripts are substantially decreased in a sigB mutant, induced in mouse gut (PubMed:20176794). Induced as cells approach stationary phase and by growth at pH 5.5, at 45 degrees Celsius, in 7.5% NaCl and by oxidative stress (at protein level) (PubMed:20176794, PubMed:21725001).</text>
</comment>
<comment type="domain">
    <text evidence="4">The N-terminus (36-79) resembles a truncated EF hand, the LRR region (80-262) has a curved form while residues 263-343 form an Ig-like region.</text>
</comment>
<comment type="disruption phenotype">
    <text evidence="4 5">Increased expression of InlA (PubMed:20176794). No change in invasion or bacterial survival in host mamammalian cells including macrophages (PubMed:20176794). Decreased bacterial counts in blood, spleen and liver of intravenously inoculated BALB/c and C57BL/6 mice (PubMed:11575932, PubMed:20176794). Increased production of host IL-6 in liver and spleen of intravenously infected BALB/c mice, but not in macrophage cell lines (PubMed:20176794).</text>
</comment>
<comment type="similarity">
    <text evidence="8">Belongs to the internalin family.</text>
</comment>